<accession>Q7MN30</accession>
<evidence type="ECO:0000255" key="1">
    <source>
        <dbReference type="HAMAP-Rule" id="MF_00817"/>
    </source>
</evidence>
<evidence type="ECO:0000256" key="2">
    <source>
        <dbReference type="SAM" id="MobiDB-lite"/>
    </source>
</evidence>
<dbReference type="EC" id="1.7.1.13" evidence="1"/>
<dbReference type="EMBL" id="BA000037">
    <property type="protein sequence ID" value="BAC93651.1"/>
    <property type="molecule type" value="Genomic_DNA"/>
</dbReference>
<dbReference type="RefSeq" id="WP_011149695.1">
    <property type="nucleotide sequence ID" value="NC_005139.1"/>
</dbReference>
<dbReference type="SMR" id="Q7MN30"/>
<dbReference type="STRING" id="672.VV93_v1c08240"/>
<dbReference type="KEGG" id="vvy:VV0887"/>
<dbReference type="PATRIC" id="fig|196600.6.peg.891"/>
<dbReference type="eggNOG" id="COG0780">
    <property type="taxonomic scope" value="Bacteria"/>
</dbReference>
<dbReference type="eggNOG" id="COG2904">
    <property type="taxonomic scope" value="Bacteria"/>
</dbReference>
<dbReference type="HOGENOM" id="CLU_054738_0_0_6"/>
<dbReference type="UniPathway" id="UPA00392"/>
<dbReference type="Proteomes" id="UP000002675">
    <property type="component" value="Chromosome I"/>
</dbReference>
<dbReference type="GO" id="GO:0005737">
    <property type="term" value="C:cytoplasm"/>
    <property type="evidence" value="ECO:0007669"/>
    <property type="project" value="UniProtKB-SubCell"/>
</dbReference>
<dbReference type="GO" id="GO:0033739">
    <property type="term" value="F:preQ1 synthase activity"/>
    <property type="evidence" value="ECO:0007669"/>
    <property type="project" value="UniProtKB-UniRule"/>
</dbReference>
<dbReference type="GO" id="GO:0008616">
    <property type="term" value="P:queuosine biosynthetic process"/>
    <property type="evidence" value="ECO:0007669"/>
    <property type="project" value="UniProtKB-UniRule"/>
</dbReference>
<dbReference type="GO" id="GO:0006400">
    <property type="term" value="P:tRNA modification"/>
    <property type="evidence" value="ECO:0007669"/>
    <property type="project" value="UniProtKB-UniRule"/>
</dbReference>
<dbReference type="Gene3D" id="3.30.1130.10">
    <property type="match status" value="2"/>
</dbReference>
<dbReference type="HAMAP" id="MF_00817">
    <property type="entry name" value="QueF_type2"/>
    <property type="match status" value="1"/>
</dbReference>
<dbReference type="InterPro" id="IPR043133">
    <property type="entry name" value="GTP-CH-I_C/QueF"/>
</dbReference>
<dbReference type="InterPro" id="IPR050084">
    <property type="entry name" value="NADPH_dep_7-cyano-7-deazaG_red"/>
</dbReference>
<dbReference type="InterPro" id="IPR029500">
    <property type="entry name" value="QueF"/>
</dbReference>
<dbReference type="InterPro" id="IPR029139">
    <property type="entry name" value="QueF_N"/>
</dbReference>
<dbReference type="InterPro" id="IPR016428">
    <property type="entry name" value="QueF_type2"/>
</dbReference>
<dbReference type="NCBIfam" id="TIGR03138">
    <property type="entry name" value="QueF"/>
    <property type="match status" value="1"/>
</dbReference>
<dbReference type="PANTHER" id="PTHR34354">
    <property type="entry name" value="NADPH-DEPENDENT 7-CYANO-7-DEAZAGUANINE REDUCTASE"/>
    <property type="match status" value="1"/>
</dbReference>
<dbReference type="PANTHER" id="PTHR34354:SF1">
    <property type="entry name" value="NADPH-DEPENDENT 7-CYANO-7-DEAZAGUANINE REDUCTASE"/>
    <property type="match status" value="1"/>
</dbReference>
<dbReference type="Pfam" id="PF14489">
    <property type="entry name" value="QueF"/>
    <property type="match status" value="1"/>
</dbReference>
<dbReference type="Pfam" id="PF14819">
    <property type="entry name" value="QueF_N"/>
    <property type="match status" value="1"/>
</dbReference>
<dbReference type="PIRSF" id="PIRSF004750">
    <property type="entry name" value="Nitrile_oxidored_YqcD_prd"/>
    <property type="match status" value="1"/>
</dbReference>
<dbReference type="SUPFAM" id="SSF55620">
    <property type="entry name" value="Tetrahydrobiopterin biosynthesis enzymes-like"/>
    <property type="match status" value="1"/>
</dbReference>
<keyword id="KW-0963">Cytoplasm</keyword>
<keyword id="KW-0521">NADP</keyword>
<keyword id="KW-0560">Oxidoreductase</keyword>
<keyword id="KW-0671">Queuosine biosynthesis</keyword>
<comment type="function">
    <text evidence="1">Catalyzes the NADPH-dependent reduction of 7-cyano-7-deazaguanine (preQ0) to 7-aminomethyl-7-deazaguanine (preQ1).</text>
</comment>
<comment type="catalytic activity">
    <reaction evidence="1">
        <text>7-aminomethyl-7-carbaguanine + 2 NADP(+) = 7-cyano-7-deazaguanine + 2 NADPH + 3 H(+)</text>
        <dbReference type="Rhea" id="RHEA:13409"/>
        <dbReference type="ChEBI" id="CHEBI:15378"/>
        <dbReference type="ChEBI" id="CHEBI:45075"/>
        <dbReference type="ChEBI" id="CHEBI:57783"/>
        <dbReference type="ChEBI" id="CHEBI:58349"/>
        <dbReference type="ChEBI" id="CHEBI:58703"/>
        <dbReference type="EC" id="1.7.1.13"/>
    </reaction>
</comment>
<comment type="pathway">
    <text evidence="1">tRNA modification; tRNA-queuosine biosynthesis.</text>
</comment>
<comment type="subunit">
    <text evidence="1">Homodimer.</text>
</comment>
<comment type="subcellular location">
    <subcellularLocation>
        <location evidence="1">Cytoplasm</location>
    </subcellularLocation>
</comment>
<comment type="similarity">
    <text evidence="1">Belongs to the GTP cyclohydrolase I family. QueF type 2 subfamily.</text>
</comment>
<reference key="1">
    <citation type="journal article" date="2003" name="Genome Res.">
        <title>Comparative genome analysis of Vibrio vulnificus, a marine pathogen.</title>
        <authorList>
            <person name="Chen C.-Y."/>
            <person name="Wu K.-M."/>
            <person name="Chang Y.-C."/>
            <person name="Chang C.-H."/>
            <person name="Tsai H.-C."/>
            <person name="Liao T.-L."/>
            <person name="Liu Y.-M."/>
            <person name="Chen H.-J."/>
            <person name="Shen A.B.-T."/>
            <person name="Li J.-C."/>
            <person name="Su T.-L."/>
            <person name="Shao C.-P."/>
            <person name="Lee C.-T."/>
            <person name="Hor L.-I."/>
            <person name="Tsai S.-F."/>
        </authorList>
    </citation>
    <scope>NUCLEOTIDE SEQUENCE [LARGE SCALE GENOMIC DNA]</scope>
    <source>
        <strain>YJ016</strain>
    </source>
</reference>
<sequence length="281" mass="32527">MSKYSDAKELAGLTLGKKTDYANQYDPSLLQPVPRSLNRDDLQLGDELPFMGHDIWTLYELSWLNNKGLPQVAVGEVYIPATSANLIESKSFKLYLNSYNQTRFDSWEEVRQRLITDLSHCAGEAVEVAVNSVTHYTQQPIVTMEGECIDEQDIDISSYDFDDRLLEGAAGEEWVTETLHSHLLKSNCLITNQPDWGSVEIRYQGHKIDREKLLRYLVSFREHNEFHEQCVERIFTDLMKYCQPESLTVFARYTRRGGLDINPYRSTEQAKPDHNHRMARQ</sequence>
<protein>
    <recommendedName>
        <fullName evidence="1">NADPH-dependent 7-cyano-7-deazaguanine reductase</fullName>
        <ecNumber evidence="1">1.7.1.13</ecNumber>
    </recommendedName>
    <alternativeName>
        <fullName evidence="1">7-cyano-7-carbaguanine reductase</fullName>
    </alternativeName>
    <alternativeName>
        <fullName evidence="1">NADPH-dependent nitrile oxidoreductase</fullName>
    </alternativeName>
    <alternativeName>
        <fullName evidence="1">PreQ(0) reductase</fullName>
    </alternativeName>
</protein>
<feature type="chain" id="PRO_0000163066" description="NADPH-dependent 7-cyano-7-deazaguanine reductase">
    <location>
        <begin position="1"/>
        <end position="281"/>
    </location>
</feature>
<feature type="region of interest" description="Disordered" evidence="2">
    <location>
        <begin position="261"/>
        <end position="281"/>
    </location>
</feature>
<feature type="compositionally biased region" description="Basic and acidic residues" evidence="2">
    <location>
        <begin position="268"/>
        <end position="281"/>
    </location>
</feature>
<feature type="active site" description="Thioimide intermediate" evidence="1">
    <location>
        <position position="188"/>
    </location>
</feature>
<feature type="active site" description="Proton donor" evidence="1">
    <location>
        <position position="195"/>
    </location>
</feature>
<feature type="binding site" evidence="1">
    <location>
        <begin position="87"/>
        <end position="89"/>
    </location>
    <ligand>
        <name>substrate</name>
    </ligand>
</feature>
<feature type="binding site" evidence="1">
    <location>
        <begin position="89"/>
        <end position="90"/>
    </location>
    <ligand>
        <name>NADPH</name>
        <dbReference type="ChEBI" id="CHEBI:57783"/>
    </ligand>
</feature>
<feature type="binding site" evidence="1">
    <location>
        <begin position="227"/>
        <end position="228"/>
    </location>
    <ligand>
        <name>substrate</name>
    </ligand>
</feature>
<feature type="binding site" evidence="1">
    <location>
        <begin position="256"/>
        <end position="257"/>
    </location>
    <ligand>
        <name>NADPH</name>
        <dbReference type="ChEBI" id="CHEBI:57783"/>
    </ligand>
</feature>
<gene>
    <name evidence="1" type="primary">queF</name>
    <name type="ordered locus">VV0887</name>
</gene>
<organism>
    <name type="scientific">Vibrio vulnificus (strain YJ016)</name>
    <dbReference type="NCBI Taxonomy" id="196600"/>
    <lineage>
        <taxon>Bacteria</taxon>
        <taxon>Pseudomonadati</taxon>
        <taxon>Pseudomonadota</taxon>
        <taxon>Gammaproteobacteria</taxon>
        <taxon>Vibrionales</taxon>
        <taxon>Vibrionaceae</taxon>
        <taxon>Vibrio</taxon>
    </lineage>
</organism>
<name>QUEF_VIBVY</name>
<proteinExistence type="inferred from homology"/>